<feature type="chain" id="PRO_0000191776" description="Probable UDP-N-acetylglucosamine--peptide N-acetylglucosaminyltransferase SPINDLY">
    <location>
        <begin position="1"/>
        <end position="914"/>
    </location>
</feature>
<feature type="repeat" description="TPR 1">
    <location>
        <begin position="43"/>
        <end position="76"/>
    </location>
</feature>
<feature type="repeat" description="TPR 2">
    <location>
        <begin position="77"/>
        <end position="110"/>
    </location>
</feature>
<feature type="repeat" description="TPR 3">
    <location>
        <begin position="112"/>
        <end position="144"/>
    </location>
</feature>
<feature type="repeat" description="TPR 4">
    <location>
        <begin position="152"/>
        <end position="185"/>
    </location>
</feature>
<feature type="repeat" description="TPR 5">
    <location>
        <begin position="186"/>
        <end position="219"/>
    </location>
</feature>
<feature type="repeat" description="TPR 6">
    <location>
        <begin position="220"/>
        <end position="253"/>
    </location>
</feature>
<feature type="repeat" description="TPR 7">
    <location>
        <begin position="261"/>
        <end position="294"/>
    </location>
</feature>
<feature type="repeat" description="TPR 8">
    <location>
        <begin position="295"/>
        <end position="328"/>
    </location>
</feature>
<feature type="repeat" description="TPR 9">
    <location>
        <begin position="329"/>
        <end position="362"/>
    </location>
</feature>
<feature type="repeat" description="TPR 10">
    <location>
        <begin position="364"/>
        <end position="396"/>
    </location>
</feature>
<feature type="repeat" description="TPR 11">
    <location>
        <begin position="397"/>
        <end position="430"/>
    </location>
</feature>
<feature type="region of interest" description="Disordered" evidence="1">
    <location>
        <begin position="1"/>
        <end position="39"/>
    </location>
</feature>
<feature type="region of interest" description="Catalytic region">
    <location>
        <begin position="431"/>
        <end position="914"/>
    </location>
</feature>
<feature type="region of interest" description="Disordered" evidence="1">
    <location>
        <begin position="866"/>
        <end position="914"/>
    </location>
</feature>
<feature type="compositionally biased region" description="Low complexity" evidence="1">
    <location>
        <begin position="19"/>
        <end position="37"/>
    </location>
</feature>
<feature type="compositionally biased region" description="Polar residues" evidence="1">
    <location>
        <begin position="877"/>
        <end position="889"/>
    </location>
</feature>
<feature type="compositionally biased region" description="Low complexity" evidence="1">
    <location>
        <begin position="894"/>
        <end position="907"/>
    </location>
</feature>
<feature type="modified residue" description="Phosphoserine" evidence="19 20">
    <location>
        <position position="35"/>
    </location>
</feature>
<feature type="mutagenesis site" description="In spy-15; Abolishes O-fucosyltransferase activity." evidence="9">
    <original>E</original>
    <variation>K</variation>
    <location>
        <position position="567"/>
    </location>
</feature>
<feature type="mutagenesis site" description="In spy-3; induces a constitutive induction of GA signal. Abolishes O-fucosyltransferase activity." evidence="10 13">
    <original>G</original>
    <variation>S</variation>
    <location>
        <position position="593"/>
    </location>
</feature>
<feature type="mutagenesis site" description="In spy-19; Abolishes O-fucosyltransferase activity." evidence="9">
    <original>K</original>
    <variation>M</variation>
    <location>
        <position position="665"/>
    </location>
</feature>
<feature type="mutagenesis site" description="In spy-5; induces a constitutive induction of GA signal." evidence="13">
    <original>C</original>
    <variation>Y</variation>
    <location>
        <position position="845"/>
    </location>
</feature>
<feature type="helix" evidence="21">
    <location>
        <begin position="45"/>
        <end position="55"/>
    </location>
</feature>
<feature type="helix" evidence="21">
    <location>
        <begin position="59"/>
        <end position="72"/>
    </location>
</feature>
<feature type="helix" evidence="21">
    <location>
        <begin position="77"/>
        <end position="89"/>
    </location>
</feature>
<feature type="helix" evidence="21">
    <location>
        <begin position="93"/>
        <end position="106"/>
    </location>
</feature>
<feature type="helix" evidence="21">
    <location>
        <begin position="111"/>
        <end position="123"/>
    </location>
</feature>
<feature type="helix" evidence="21">
    <location>
        <begin position="127"/>
        <end position="140"/>
    </location>
</feature>
<feature type="helix" evidence="21">
    <location>
        <begin position="145"/>
        <end position="164"/>
    </location>
</feature>
<feature type="helix" evidence="21">
    <location>
        <begin position="168"/>
        <end position="181"/>
    </location>
</feature>
<feature type="helix" evidence="21">
    <location>
        <begin position="186"/>
        <end position="198"/>
    </location>
</feature>
<feature type="helix" evidence="21">
    <location>
        <begin position="202"/>
        <end position="215"/>
    </location>
</feature>
<feature type="helix" evidence="21">
    <location>
        <begin position="220"/>
        <end position="232"/>
    </location>
</feature>
<feature type="helix" evidence="21">
    <location>
        <begin position="236"/>
        <end position="249"/>
    </location>
</feature>
<feature type="helix" evidence="21">
    <location>
        <begin position="254"/>
        <end position="272"/>
    </location>
</feature>
<feature type="turn" evidence="21">
    <location>
        <begin position="273"/>
        <end position="275"/>
    </location>
</feature>
<feature type="helix" evidence="21">
    <location>
        <begin position="277"/>
        <end position="290"/>
    </location>
</feature>
<feature type="helix" evidence="21">
    <location>
        <begin position="295"/>
        <end position="307"/>
    </location>
</feature>
<feature type="helix" evidence="21">
    <location>
        <begin position="311"/>
        <end position="324"/>
    </location>
</feature>
<feature type="helix" evidence="21">
    <location>
        <begin position="329"/>
        <end position="340"/>
    </location>
</feature>
<feature type="turn" evidence="21">
    <location>
        <begin position="341"/>
        <end position="343"/>
    </location>
</feature>
<feature type="helix" evidence="21">
    <location>
        <begin position="345"/>
        <end position="358"/>
    </location>
</feature>
<feature type="helix" evidence="21">
    <location>
        <begin position="363"/>
        <end position="376"/>
    </location>
</feature>
<feature type="helix" evidence="21">
    <location>
        <begin position="379"/>
        <end position="392"/>
    </location>
</feature>
<feature type="helix" evidence="21">
    <location>
        <begin position="397"/>
        <end position="410"/>
    </location>
</feature>
<feature type="helix" evidence="21">
    <location>
        <begin position="413"/>
        <end position="426"/>
    </location>
</feature>
<feature type="helix" evidence="21">
    <location>
        <begin position="431"/>
        <end position="441"/>
    </location>
</feature>
<feature type="turn" evidence="21">
    <location>
        <begin position="442"/>
        <end position="444"/>
    </location>
</feature>
<feature type="strand" evidence="21">
    <location>
        <begin position="448"/>
        <end position="450"/>
    </location>
</feature>
<feature type="helix" evidence="21">
    <location>
        <begin position="451"/>
        <end position="465"/>
    </location>
</feature>
<feature type="strand" evidence="21">
    <location>
        <begin position="483"/>
        <end position="490"/>
    </location>
</feature>
<feature type="strand" evidence="21">
    <location>
        <begin position="493"/>
        <end position="495"/>
    </location>
</feature>
<feature type="helix" evidence="21">
    <location>
        <begin position="498"/>
        <end position="506"/>
    </location>
</feature>
<feature type="strand" evidence="21">
    <location>
        <begin position="511"/>
        <end position="519"/>
    </location>
</feature>
<feature type="helix" evidence="21">
    <location>
        <begin position="526"/>
        <end position="538"/>
    </location>
</feature>
<feature type="strand" evidence="21">
    <location>
        <begin position="541"/>
        <end position="544"/>
    </location>
</feature>
<feature type="helix" evidence="21">
    <location>
        <begin position="550"/>
        <end position="559"/>
    </location>
</feature>
<feature type="strand" evidence="21">
    <location>
        <begin position="563"/>
        <end position="567"/>
    </location>
</feature>
<feature type="helix" evidence="21">
    <location>
        <begin position="577"/>
        <end position="581"/>
    </location>
</feature>
<feature type="strand" evidence="21">
    <location>
        <begin position="585"/>
        <end position="590"/>
    </location>
</feature>
<feature type="strand" evidence="21">
    <location>
        <begin position="605"/>
        <end position="609"/>
    </location>
</feature>
<feature type="turn" evidence="21">
    <location>
        <begin position="610"/>
        <end position="612"/>
    </location>
</feature>
<feature type="strand" evidence="21">
    <location>
        <begin position="622"/>
        <end position="630"/>
    </location>
</feature>
<feature type="helix" evidence="21">
    <location>
        <begin position="649"/>
        <end position="652"/>
    </location>
</feature>
<feature type="strand" evidence="21">
    <location>
        <begin position="656"/>
        <end position="659"/>
    </location>
</feature>
<feature type="turn" evidence="21">
    <location>
        <begin position="663"/>
        <end position="665"/>
    </location>
</feature>
<feature type="helix" evidence="21">
    <location>
        <begin position="668"/>
        <end position="680"/>
    </location>
</feature>
<feature type="strand" evidence="21">
    <location>
        <begin position="685"/>
        <end position="689"/>
    </location>
</feature>
<feature type="helix" evidence="21">
    <location>
        <begin position="691"/>
        <end position="694"/>
    </location>
</feature>
<feature type="helix" evidence="21">
    <location>
        <begin position="696"/>
        <end position="708"/>
    </location>
</feature>
<feature type="helix" evidence="21">
    <location>
        <begin position="713"/>
        <end position="715"/>
    </location>
</feature>
<feature type="strand" evidence="21">
    <location>
        <begin position="716"/>
        <end position="719"/>
    </location>
</feature>
<feature type="helix" evidence="21">
    <location>
        <begin position="725"/>
        <end position="730"/>
    </location>
</feature>
<feature type="helix" evidence="21">
    <location>
        <begin position="731"/>
        <end position="734"/>
    </location>
</feature>
<feature type="strand" evidence="21">
    <location>
        <begin position="736"/>
        <end position="739"/>
    </location>
</feature>
<feature type="strand" evidence="21">
    <location>
        <begin position="742"/>
        <end position="744"/>
    </location>
</feature>
<feature type="helix" evidence="21">
    <location>
        <begin position="748"/>
        <end position="755"/>
    </location>
</feature>
<feature type="strand" evidence="21">
    <location>
        <begin position="760"/>
        <end position="763"/>
    </location>
</feature>
<feature type="helix" evidence="21">
    <location>
        <begin position="768"/>
        <end position="770"/>
    </location>
</feature>
<feature type="helix" evidence="21">
    <location>
        <begin position="772"/>
        <end position="780"/>
    </location>
</feature>
<feature type="helix" evidence="21">
    <location>
        <begin position="783"/>
        <end position="785"/>
    </location>
</feature>
<feature type="strand" evidence="21">
    <location>
        <begin position="786"/>
        <end position="789"/>
    </location>
</feature>
<feature type="helix" evidence="21">
    <location>
        <begin position="790"/>
        <end position="800"/>
    </location>
</feature>
<feature type="helix" evidence="21">
    <location>
        <begin position="804"/>
        <end position="820"/>
    </location>
</feature>
<feature type="helix" evidence="21">
    <location>
        <begin position="826"/>
        <end position="846"/>
    </location>
</feature>
<dbReference type="EC" id="2.4.1.255" evidence="14"/>
<dbReference type="EC" id="2.4.1.221" evidence="9"/>
<dbReference type="EMBL" id="U62135">
    <property type="protein sequence ID" value="AAC49446.1"/>
    <property type="molecule type" value="mRNA"/>
</dbReference>
<dbReference type="EMBL" id="AC008153">
    <property type="protein sequence ID" value="AAG51433.1"/>
    <property type="molecule type" value="Genomic_DNA"/>
</dbReference>
<dbReference type="EMBL" id="CP002686">
    <property type="protein sequence ID" value="AEE75060.1"/>
    <property type="molecule type" value="Genomic_DNA"/>
</dbReference>
<dbReference type="EMBL" id="AK220931">
    <property type="protein sequence ID" value="BAD94413.1"/>
    <property type="status" value="ALT_FRAME"/>
    <property type="molecule type" value="mRNA"/>
</dbReference>
<dbReference type="EMBL" id="AK221192">
    <property type="protein sequence ID" value="BAD95289.1"/>
    <property type="status" value="ALT_FRAME"/>
    <property type="molecule type" value="mRNA"/>
</dbReference>
<dbReference type="EMBL" id="AK221314">
    <property type="protein sequence ID" value="BAD94086.1"/>
    <property type="molecule type" value="mRNA"/>
</dbReference>
<dbReference type="RefSeq" id="NP_187761.1">
    <molecule id="Q96301-1"/>
    <property type="nucleotide sequence ID" value="NM_111987.4"/>
</dbReference>
<dbReference type="PDB" id="7Y4I">
    <property type="method" value="X-ray"/>
    <property type="resolution" value="2.85 A"/>
    <property type="chains" value="A/B=1-914"/>
</dbReference>
<dbReference type="PDB" id="8DTF">
    <property type="method" value="EM"/>
    <property type="resolution" value="3.70 A"/>
    <property type="chains" value="A/B=1-914"/>
</dbReference>
<dbReference type="PDB" id="8DTG">
    <property type="method" value="EM"/>
    <property type="resolution" value="3.90 A"/>
    <property type="chains" value="A/B=1-914"/>
</dbReference>
<dbReference type="PDB" id="8DTH">
    <property type="method" value="EM"/>
    <property type="resolution" value="3.60 A"/>
    <property type="chains" value="A/B=1-914"/>
</dbReference>
<dbReference type="PDB" id="8DTI">
    <property type="method" value="EM"/>
    <property type="resolution" value="3.80 A"/>
    <property type="chains" value="A/B=1-914"/>
</dbReference>
<dbReference type="PDBsum" id="7Y4I"/>
<dbReference type="PDBsum" id="8DTF"/>
<dbReference type="PDBsum" id="8DTG"/>
<dbReference type="PDBsum" id="8DTH"/>
<dbReference type="PDBsum" id="8DTI"/>
<dbReference type="EMDB" id="EMD-27696"/>
<dbReference type="EMDB" id="EMD-27697"/>
<dbReference type="EMDB" id="EMD-27698"/>
<dbReference type="EMDB" id="EMD-27699"/>
<dbReference type="SMR" id="Q96301"/>
<dbReference type="BioGRID" id="5661">
    <property type="interactions" value="8"/>
</dbReference>
<dbReference type="FunCoup" id="Q96301">
    <property type="interactions" value="2425"/>
</dbReference>
<dbReference type="IntAct" id="Q96301">
    <property type="interactions" value="1"/>
</dbReference>
<dbReference type="STRING" id="3702.Q96301"/>
<dbReference type="CAZy" id="GT41">
    <property type="family name" value="Glycosyltransferase Family 41"/>
</dbReference>
<dbReference type="GlyGen" id="Q96301">
    <property type="glycosylation" value="5 sites, 1 O-linked glycan (3 sites)"/>
</dbReference>
<dbReference type="iPTMnet" id="Q96301"/>
<dbReference type="PaxDb" id="3702-AT3G11540.1"/>
<dbReference type="ProteomicsDB" id="226785">
    <molecule id="Q96301-1"/>
</dbReference>
<dbReference type="EnsemblPlants" id="AT3G11540.1">
    <molecule id="Q96301-1"/>
    <property type="protein sequence ID" value="AT3G11540.1"/>
    <property type="gene ID" value="AT3G11540"/>
</dbReference>
<dbReference type="GeneID" id="820327"/>
<dbReference type="Gramene" id="AT3G11540.1">
    <molecule id="Q96301-1"/>
    <property type="protein sequence ID" value="AT3G11540.1"/>
    <property type="gene ID" value="AT3G11540"/>
</dbReference>
<dbReference type="KEGG" id="ath:AT3G11540"/>
<dbReference type="Araport" id="AT3G11540"/>
<dbReference type="TAIR" id="AT3G11540">
    <property type="gene designation" value="SPY"/>
</dbReference>
<dbReference type="eggNOG" id="KOG4626">
    <property type="taxonomic scope" value="Eukaryota"/>
</dbReference>
<dbReference type="HOGENOM" id="CLU_001721_4_0_1"/>
<dbReference type="InParanoid" id="Q96301"/>
<dbReference type="OMA" id="CALTYCG"/>
<dbReference type="PhylomeDB" id="Q96301"/>
<dbReference type="BRENDA" id="2.4.1.221">
    <property type="organism ID" value="399"/>
</dbReference>
<dbReference type="BRENDA" id="2.4.1.255">
    <property type="organism ID" value="399"/>
</dbReference>
<dbReference type="UniPathway" id="UPA00378"/>
<dbReference type="PRO" id="PR:Q96301"/>
<dbReference type="Proteomes" id="UP000006548">
    <property type="component" value="Chromosome 3"/>
</dbReference>
<dbReference type="ExpressionAtlas" id="Q96301">
    <property type="expression patterns" value="baseline and differential"/>
</dbReference>
<dbReference type="GO" id="GO:0005737">
    <property type="term" value="C:cytoplasm"/>
    <property type="evidence" value="ECO:0000314"/>
    <property type="project" value="TAIR"/>
</dbReference>
<dbReference type="GO" id="GO:0005634">
    <property type="term" value="C:nucleus"/>
    <property type="evidence" value="ECO:0000314"/>
    <property type="project" value="TAIR"/>
</dbReference>
<dbReference type="GO" id="GO:0046922">
    <property type="term" value="F:peptide-O-fucosyltransferase activity"/>
    <property type="evidence" value="ECO:0000314"/>
    <property type="project" value="UniProtKB"/>
</dbReference>
<dbReference type="GO" id="GO:0016262">
    <property type="term" value="F:protein N-acetylglucosaminyltransferase activity"/>
    <property type="evidence" value="ECO:0000304"/>
    <property type="project" value="TAIR"/>
</dbReference>
<dbReference type="GO" id="GO:0097363">
    <property type="term" value="F:protein O-acetylglucosaminyltransferase activity"/>
    <property type="evidence" value="ECO:0007669"/>
    <property type="project" value="UniProtKB-EC"/>
</dbReference>
<dbReference type="GO" id="GO:0030154">
    <property type="term" value="P:cell differentiation"/>
    <property type="evidence" value="ECO:0007669"/>
    <property type="project" value="UniProtKB-KW"/>
</dbReference>
<dbReference type="GO" id="GO:0009736">
    <property type="term" value="P:cytokinin-activated signaling pathway"/>
    <property type="evidence" value="ECO:0000315"/>
    <property type="project" value="TAIR"/>
</dbReference>
<dbReference type="GO" id="GO:0009908">
    <property type="term" value="P:flower development"/>
    <property type="evidence" value="ECO:0007669"/>
    <property type="project" value="UniProtKB-KW"/>
</dbReference>
<dbReference type="GO" id="GO:0009740">
    <property type="term" value="P:gibberellic acid mediated signaling pathway"/>
    <property type="evidence" value="ECO:0000304"/>
    <property type="project" value="TAIR"/>
</dbReference>
<dbReference type="GO" id="GO:0009938">
    <property type="term" value="P:negative regulation of gibberellic acid mediated signaling pathway"/>
    <property type="evidence" value="ECO:0000316"/>
    <property type="project" value="TAIR"/>
</dbReference>
<dbReference type="GO" id="GO:0036066">
    <property type="term" value="P:protein O-linked fucosylation"/>
    <property type="evidence" value="ECO:0000314"/>
    <property type="project" value="UniProtKB"/>
</dbReference>
<dbReference type="GO" id="GO:2000377">
    <property type="term" value="P:regulation of reactive oxygen species metabolic process"/>
    <property type="evidence" value="ECO:0000315"/>
    <property type="project" value="TAIR"/>
</dbReference>
<dbReference type="GO" id="GO:0048511">
    <property type="term" value="P:rhythmic process"/>
    <property type="evidence" value="ECO:0007669"/>
    <property type="project" value="UniProtKB-KW"/>
</dbReference>
<dbReference type="FunFam" id="1.25.40.10:FF:002235">
    <property type="entry name" value="Probable UDP-N-acetylglucosamine--peptide N-acetylglucosaminyltransferase SPINDLY"/>
    <property type="match status" value="1"/>
</dbReference>
<dbReference type="FunFam" id="1.25.40.10:FF:001620">
    <property type="entry name" value="probable UDP-N-acetylglucosamine--peptide N-acetylglucosaminyltransferase SPINDLY"/>
    <property type="match status" value="1"/>
</dbReference>
<dbReference type="Gene3D" id="3.40.50.11380">
    <property type="match status" value="1"/>
</dbReference>
<dbReference type="Gene3D" id="3.40.50.2000">
    <property type="entry name" value="Glycogen Phosphorylase B"/>
    <property type="match status" value="1"/>
</dbReference>
<dbReference type="Gene3D" id="1.25.40.10">
    <property type="entry name" value="Tetratricopeptide repeat domain"/>
    <property type="match status" value="4"/>
</dbReference>
<dbReference type="InterPro" id="IPR051939">
    <property type="entry name" value="Glycosyltr_41/O-GlcNAc_trsf"/>
</dbReference>
<dbReference type="InterPro" id="IPR029489">
    <property type="entry name" value="OGT/SEC/SPY_C"/>
</dbReference>
<dbReference type="InterPro" id="IPR006597">
    <property type="entry name" value="Sel1-like"/>
</dbReference>
<dbReference type="InterPro" id="IPR011990">
    <property type="entry name" value="TPR-like_helical_dom_sf"/>
</dbReference>
<dbReference type="InterPro" id="IPR019734">
    <property type="entry name" value="TPR_rpt"/>
</dbReference>
<dbReference type="PANTHER" id="PTHR44835:SF1">
    <property type="entry name" value="PROTEIN O-GLCNAC TRANSFERASE"/>
    <property type="match status" value="1"/>
</dbReference>
<dbReference type="PANTHER" id="PTHR44835">
    <property type="entry name" value="UDP-N-ACETYLGLUCOSAMINE--PEPTIDE N-ACETYLGLUCOSAMINYLTRANSFERASE SPINDLY-RELATED"/>
    <property type="match status" value="1"/>
</dbReference>
<dbReference type="Pfam" id="PF13844">
    <property type="entry name" value="Glyco_transf_41"/>
    <property type="match status" value="2"/>
</dbReference>
<dbReference type="Pfam" id="PF00515">
    <property type="entry name" value="TPR_1"/>
    <property type="match status" value="4"/>
</dbReference>
<dbReference type="Pfam" id="PF13374">
    <property type="entry name" value="TPR_10"/>
    <property type="match status" value="1"/>
</dbReference>
<dbReference type="Pfam" id="PF13432">
    <property type="entry name" value="TPR_16"/>
    <property type="match status" value="1"/>
</dbReference>
<dbReference type="Pfam" id="PF13181">
    <property type="entry name" value="TPR_8"/>
    <property type="match status" value="1"/>
</dbReference>
<dbReference type="SMART" id="SM00671">
    <property type="entry name" value="SEL1"/>
    <property type="match status" value="4"/>
</dbReference>
<dbReference type="SMART" id="SM00028">
    <property type="entry name" value="TPR"/>
    <property type="match status" value="11"/>
</dbReference>
<dbReference type="SUPFAM" id="SSF48452">
    <property type="entry name" value="TPR-like"/>
    <property type="match status" value="2"/>
</dbReference>
<dbReference type="PROSITE" id="PS50005">
    <property type="entry name" value="TPR"/>
    <property type="match status" value="11"/>
</dbReference>
<dbReference type="PROSITE" id="PS50293">
    <property type="entry name" value="TPR_REGION"/>
    <property type="match status" value="1"/>
</dbReference>
<accession>Q96301</accession>
<accession>Q56YX8</accession>
<sequence length="914" mass="101430">MVGLEDDTERERSPVVENGFSNGSRSSSSSAGVLSPSRKVTQGNDTLSYANILRARNKFADALALYEAMLEKDSKNVEAHIGKGICLQTQNKGNLAFDCFSEAIRLDPHNACALTHCGILHKEEGRLVEAAESYQKALMADASYKPAAECLAIVLTDLGTSLKLAGNTQEGIQKYYEALKIDPHYAPAYYNLGVVYSEMMQYDNALSCYEKAALERPMYAEAYCNMGVIYKNRGDLEMAITCYERCLAVSPNFEIAKNNMAIALTDLGTKVKLEGDVTQGVAYYKKALYYNWHYADAMYNLGVAYGEMLKFDMAIVFYELAFHFNPHCAEACNNLGVLYKDRDNLDKAVECYQMALSIKPNFAQSLNNLGVVYTVQGKMDAAASMIEKAILANPTYAEAFNNLGVLYRDAGNITMAIDAYEECLKIDPDSRNAGQNRLLAMNYINEGLDDKLFEAHRDWGWRFTRLHPQYTSWDNLKDPERPITIGYISPDFFTHSVSYFIEAPLTHHDYTKYKVVVYSAVVKADAKTYRFRDKVLKKGGVWKDIYGIDEKKIASMVREDKIDILVELTGHTANNKLGTMACRPAPVQVTWIGYPNTTGLPTVDYRITDSLADPPDTKQKQVEELVRLPDCFLCYTPSPEAGPVCPTPALSNGFVTFGSFNNLAKITPKVLQVWARILCAVPNSRLVVKCKPFCCDSIRQRFLTTLEQLGLESKRVDLLPLILFNHDHMQAYSLMDISLDTFPYAGTTTTCESLYMGVPCVTMAGSVHAHNVGVSLLTKVGLGHLVAKNEDEYVQLSVDLASDVTALSKLRMSLRDLMAGSPVCNGPSFAVGLESAYRNMWKKYCKGEVPSLRRMEMLQKEVHDDPLISKDLGPSRVSVTGEATPSLKANGSAPVPSSLPTQSPQLSKRMDSTS</sequence>
<gene>
    <name evidence="15" type="primary">SPY</name>
    <name evidence="17" type="ordered locus">At3g11540</name>
    <name evidence="18" type="ORF">F24K9.29</name>
</gene>
<keyword id="KW-0002">3D-structure</keyword>
<keyword id="KW-0025">Alternative splicing</keyword>
<keyword id="KW-0090">Biological rhythms</keyword>
<keyword id="KW-0963">Cytoplasm</keyword>
<keyword id="KW-0217">Developmental protein</keyword>
<keyword id="KW-0221">Differentiation</keyword>
<keyword id="KW-0287">Flowering</keyword>
<keyword id="KW-0939">Gibberellin signaling pathway</keyword>
<keyword id="KW-0328">Glycosyltransferase</keyword>
<keyword id="KW-0539">Nucleus</keyword>
<keyword id="KW-0597">Phosphoprotein</keyword>
<keyword id="KW-1185">Reference proteome</keyword>
<keyword id="KW-0677">Repeat</keyword>
<keyword id="KW-0802">TPR repeat</keyword>
<keyword id="KW-0808">Transferase</keyword>
<reference key="1">
    <citation type="journal article" date="1996" name="Proc. Natl. Acad. Sci. U.S.A.">
        <title>SPINDLY, a tetratricopeptide repeat protein involved in gibberellin signal transduction in Arabidopsis.</title>
        <authorList>
            <person name="Jacobsen S.E."/>
            <person name="Binkowski K.A."/>
            <person name="Olszewski N.E."/>
        </authorList>
    </citation>
    <scope>NUCLEOTIDE SEQUENCE [MRNA]</scope>
    <scope>FUNCTION</scope>
    <scope>MUTAGENESIS OF GLY-593 AND CYS-845</scope>
    <source>
        <strain>cv. Columbia</strain>
    </source>
</reference>
<reference key="2">
    <citation type="journal article" date="2000" name="Nature">
        <title>Sequence and analysis of chromosome 3 of the plant Arabidopsis thaliana.</title>
        <authorList>
            <person name="Salanoubat M."/>
            <person name="Lemcke K."/>
            <person name="Rieger M."/>
            <person name="Ansorge W."/>
            <person name="Unseld M."/>
            <person name="Fartmann B."/>
            <person name="Valle G."/>
            <person name="Bloecker H."/>
            <person name="Perez-Alonso M."/>
            <person name="Obermaier B."/>
            <person name="Delseny M."/>
            <person name="Boutry M."/>
            <person name="Grivell L.A."/>
            <person name="Mache R."/>
            <person name="Puigdomenech P."/>
            <person name="De Simone V."/>
            <person name="Choisne N."/>
            <person name="Artiguenave F."/>
            <person name="Robert C."/>
            <person name="Brottier P."/>
            <person name="Wincker P."/>
            <person name="Cattolico L."/>
            <person name="Weissenbach J."/>
            <person name="Saurin W."/>
            <person name="Quetier F."/>
            <person name="Schaefer M."/>
            <person name="Mueller-Auer S."/>
            <person name="Gabel C."/>
            <person name="Fuchs M."/>
            <person name="Benes V."/>
            <person name="Wurmbach E."/>
            <person name="Drzonek H."/>
            <person name="Erfle H."/>
            <person name="Jordan N."/>
            <person name="Bangert S."/>
            <person name="Wiedelmann R."/>
            <person name="Kranz H."/>
            <person name="Voss H."/>
            <person name="Holland R."/>
            <person name="Brandt P."/>
            <person name="Nyakatura G."/>
            <person name="Vezzi A."/>
            <person name="D'Angelo M."/>
            <person name="Pallavicini A."/>
            <person name="Toppo S."/>
            <person name="Simionati B."/>
            <person name="Conrad A."/>
            <person name="Hornischer K."/>
            <person name="Kauer G."/>
            <person name="Loehnert T.-H."/>
            <person name="Nordsiek G."/>
            <person name="Reichelt J."/>
            <person name="Scharfe M."/>
            <person name="Schoen O."/>
            <person name="Bargues M."/>
            <person name="Terol J."/>
            <person name="Climent J."/>
            <person name="Navarro P."/>
            <person name="Collado C."/>
            <person name="Perez-Perez A."/>
            <person name="Ottenwaelder B."/>
            <person name="Duchemin D."/>
            <person name="Cooke R."/>
            <person name="Laudie M."/>
            <person name="Berger-Llauro C."/>
            <person name="Purnelle B."/>
            <person name="Masuy D."/>
            <person name="de Haan M."/>
            <person name="Maarse A.C."/>
            <person name="Alcaraz J.-P."/>
            <person name="Cottet A."/>
            <person name="Casacuberta E."/>
            <person name="Monfort A."/>
            <person name="Argiriou A."/>
            <person name="Flores M."/>
            <person name="Liguori R."/>
            <person name="Vitale D."/>
            <person name="Mannhaupt G."/>
            <person name="Haase D."/>
            <person name="Schoof H."/>
            <person name="Rudd S."/>
            <person name="Zaccaria P."/>
            <person name="Mewes H.-W."/>
            <person name="Mayer K.F.X."/>
            <person name="Kaul S."/>
            <person name="Town C.D."/>
            <person name="Koo H.L."/>
            <person name="Tallon L.J."/>
            <person name="Jenkins J."/>
            <person name="Rooney T."/>
            <person name="Rizzo M."/>
            <person name="Walts A."/>
            <person name="Utterback T."/>
            <person name="Fujii C.Y."/>
            <person name="Shea T.P."/>
            <person name="Creasy T.H."/>
            <person name="Haas B."/>
            <person name="Maiti R."/>
            <person name="Wu D."/>
            <person name="Peterson J."/>
            <person name="Van Aken S."/>
            <person name="Pai G."/>
            <person name="Militscher J."/>
            <person name="Sellers P."/>
            <person name="Gill J.E."/>
            <person name="Feldblyum T.V."/>
            <person name="Preuss D."/>
            <person name="Lin X."/>
            <person name="Nierman W.C."/>
            <person name="Salzberg S.L."/>
            <person name="White O."/>
            <person name="Venter J.C."/>
            <person name="Fraser C.M."/>
            <person name="Kaneko T."/>
            <person name="Nakamura Y."/>
            <person name="Sato S."/>
            <person name="Kato T."/>
            <person name="Asamizu E."/>
            <person name="Sasamoto S."/>
            <person name="Kimura T."/>
            <person name="Idesawa K."/>
            <person name="Kawashima K."/>
            <person name="Kishida Y."/>
            <person name="Kiyokawa C."/>
            <person name="Kohara M."/>
            <person name="Matsumoto M."/>
            <person name="Matsuno A."/>
            <person name="Muraki A."/>
            <person name="Nakayama S."/>
            <person name="Nakazaki N."/>
            <person name="Shinpo S."/>
            <person name="Takeuchi C."/>
            <person name="Wada T."/>
            <person name="Watanabe A."/>
            <person name="Yamada M."/>
            <person name="Yasuda M."/>
            <person name="Tabata S."/>
        </authorList>
    </citation>
    <scope>NUCLEOTIDE SEQUENCE [LARGE SCALE GENOMIC DNA]</scope>
    <source>
        <strain>cv. Columbia</strain>
    </source>
</reference>
<reference key="3">
    <citation type="journal article" date="2017" name="Plant J.">
        <title>Araport11: a complete reannotation of the Arabidopsis thaliana reference genome.</title>
        <authorList>
            <person name="Cheng C.Y."/>
            <person name="Krishnakumar V."/>
            <person name="Chan A.P."/>
            <person name="Thibaud-Nissen F."/>
            <person name="Schobel S."/>
            <person name="Town C.D."/>
        </authorList>
    </citation>
    <scope>GENOME REANNOTATION</scope>
    <source>
        <strain>cv. Columbia</strain>
    </source>
</reference>
<reference key="4">
    <citation type="submission" date="2005-03" db="EMBL/GenBank/DDBJ databases">
        <title>Large-scale analysis of RIKEN Arabidopsis full-length (RAFL) cDNAs.</title>
        <authorList>
            <person name="Totoki Y."/>
            <person name="Seki M."/>
            <person name="Ishida J."/>
            <person name="Nakajima M."/>
            <person name="Enju A."/>
            <person name="Kamiya A."/>
            <person name="Narusaka M."/>
            <person name="Shin-i T."/>
            <person name="Nakagawa M."/>
            <person name="Sakamoto N."/>
            <person name="Oishi K."/>
            <person name="Kohara Y."/>
            <person name="Kobayashi M."/>
            <person name="Toyoda A."/>
            <person name="Sakaki Y."/>
            <person name="Sakurai T."/>
            <person name="Iida K."/>
            <person name="Akiyama K."/>
            <person name="Satou M."/>
            <person name="Toyoda T."/>
            <person name="Konagaya A."/>
            <person name="Carninci P."/>
            <person name="Kawai J."/>
            <person name="Hayashizaki Y."/>
            <person name="Shinozaki K."/>
        </authorList>
    </citation>
    <scope>NUCLEOTIDE SEQUENCE [LARGE SCALE MRNA]</scope>
    <source>
        <strain>cv. Columbia</strain>
    </source>
</reference>
<reference key="5">
    <citation type="book" date="1999" name="Plant biotechnology and in vitro biology in the 21st century">
        <title>Genetic and biochemical analysis of Arabidopsis SPY.</title>
        <editorList>
            <person name="Altman A."/>
            <person name="Ziv M."/>
            <person name="Izhar S."/>
        </editorList>
        <authorList>
            <person name="Thornton T.M."/>
            <person name="Kreppel L."/>
            <person name="Hart G.W."/>
            <person name="Olszewski N.E."/>
        </authorList>
    </citation>
    <scope>FUNCTION</scope>
    <scope>CATALYTIC ACTIVITY</scope>
</reference>
<reference key="6">
    <citation type="journal article" date="2001" name="Plant Physiol.">
        <title>Altered expression of SPINDLY affects gibberellin response and plant development.</title>
        <authorList>
            <person name="Swain S.M."/>
            <person name="Tseng T.-S."/>
            <person name="Olszewski N.E."/>
        </authorList>
    </citation>
    <scope>FUNCTION</scope>
</reference>
<reference key="7">
    <citation type="journal article" date="2001" name="Plant Physiol.">
        <title>Ectopic expression of the tetratricopeptide repeat domain of SPINDLY causes defects in gibberellin response.</title>
        <authorList>
            <person name="Tseng T.-S."/>
            <person name="Swain S.M."/>
            <person name="Olszewski N.E."/>
        </authorList>
    </citation>
    <scope>HOMODIMERIZATION</scope>
    <scope>DOMAIN</scope>
</reference>
<reference key="8">
    <citation type="journal article" date="2002" name="Plant Physiol.">
        <title>SPINDLY is a nuclear-localized repressor of gibberellin signal transduction expressed throughout the plant.</title>
        <authorList>
            <person name="Swain S.M."/>
            <person name="Tseng T.-S."/>
            <person name="Thornton T.M."/>
            <person name="Gopalraj M."/>
            <person name="Olszewski N.E."/>
        </authorList>
    </citation>
    <scope>SUBCELLULAR LOCATION</scope>
    <scope>TISSUE SPECIFICITY</scope>
    <scope>DEVELOPMENTAL STAGE</scope>
</reference>
<reference key="9">
    <citation type="journal article" date="2002" name="Genetics">
        <title>Two O-linked N-acetylglucosamine transferase genes of Arabidopsis thaliana L. Heynh. have overlapping functions necessary for gamete and seed development.</title>
        <authorList>
            <person name="Hartweck L.M."/>
            <person name="Scott C.L."/>
            <person name="Olszewski N.E."/>
        </authorList>
    </citation>
    <scope>FUNCTION</scope>
</reference>
<reference key="10">
    <citation type="journal article" date="2004" name="Plant Cell">
        <title>SPINDLY and GIGANTEA interact and act in Arabidopsis thaliana pathways involved in light responses, flowering, and rhythms in cotyledon movements.</title>
        <authorList>
            <person name="Tseng T.-S."/>
            <person name="Salome P.A."/>
            <person name="McClung C.R."/>
            <person name="Olszewski N.E."/>
        </authorList>
    </citation>
    <scope>FUNCTION</scope>
    <scope>INTERACTION WITH GI</scope>
</reference>
<reference key="11">
    <citation type="journal article" date="2005" name="Plant Cell">
        <title>Cross talk between gibberellin and cytokinin: the Arabidopsis GA response inhibitor SPINDLY plays a positive role in cytokinin signaling.</title>
        <authorList>
            <person name="Greenboim-Wainberg Y."/>
            <person name="Maymon I."/>
            <person name="Borochov R."/>
            <person name="Alvarez J."/>
            <person name="Olszewski N."/>
            <person name="Ori N."/>
            <person name="Eshed Y."/>
            <person name="Weiss D."/>
        </authorList>
    </citation>
    <scope>FUNCTION</scope>
</reference>
<reference key="12">
    <citation type="journal article" date="2008" name="J. Proteome Res.">
        <title>Site-specific phosphorylation profiling of Arabidopsis proteins by mass spectrometry and peptide chip analysis.</title>
        <authorList>
            <person name="de la Fuente van Bentem S."/>
            <person name="Anrather D."/>
            <person name="Dohnal I."/>
            <person name="Roitinger E."/>
            <person name="Csaszar E."/>
            <person name="Joore J."/>
            <person name="Buijnink J."/>
            <person name="Carreri A."/>
            <person name="Forzani C."/>
            <person name="Lorkovic Z.J."/>
            <person name="Barta A."/>
            <person name="Lecourieux D."/>
            <person name="Verhounig A."/>
            <person name="Jonak C."/>
            <person name="Hirt H."/>
        </authorList>
    </citation>
    <scope>PHOSPHORYLATION [LARGE SCALE ANALYSIS] AT SER-35</scope>
    <scope>IDENTIFICATION BY MASS SPECTROMETRY [LARGE SCALE ANALYSIS]</scope>
    <source>
        <tissue>Root</tissue>
    </source>
</reference>
<reference key="13">
    <citation type="journal article" date="2009" name="Plant Physiol.">
        <title>Large-scale Arabidopsis phosphoproteome profiling reveals novel chloroplast kinase substrates and phosphorylation networks.</title>
        <authorList>
            <person name="Reiland S."/>
            <person name="Messerli G."/>
            <person name="Baerenfaller K."/>
            <person name="Gerrits B."/>
            <person name="Endler A."/>
            <person name="Grossmann J."/>
            <person name="Gruissem W."/>
            <person name="Baginsky S."/>
        </authorList>
    </citation>
    <scope>PHOSPHORYLATION [LARGE SCALE ANALYSIS] AT SER-35</scope>
    <scope>IDENTIFICATION BY MASS SPECTROMETRY [LARGE SCALE ANALYSIS]</scope>
</reference>
<reference key="14">
    <citation type="journal article" date="2012" name="Plant Cell">
        <title>The Arabidopsis O-linked N-acetylglucosamine transferase SPINDLY interacts with class I TCPs to facilitate cytokinin responses in leaves and flowers.</title>
        <authorList>
            <person name="Steiner E."/>
            <person name="Efroni I."/>
            <person name="Gopalraj M."/>
            <person name="Saathoff K."/>
            <person name="Tseng T.S."/>
            <person name="Kieffer M."/>
            <person name="Eshed Y."/>
            <person name="Olszewski N."/>
            <person name="Weiss D."/>
        </authorList>
    </citation>
    <scope>INTERACTION WITH TCP14 AND TCP15</scope>
</reference>
<reference key="15">
    <citation type="journal article" date="2017" name="Nat. Chem. Biol.">
        <title>The Arabidopsis O-fucosyltransferase SPINDLY activates nuclear growth repressor DELLA.</title>
        <authorList>
            <person name="Zentella R."/>
            <person name="Sui N."/>
            <person name="Barnhill B."/>
            <person name="Hsieh W.P."/>
            <person name="Hu J."/>
            <person name="Shabanowitz J."/>
            <person name="Boyce M."/>
            <person name="Olszewski N.E."/>
            <person name="Zhou P."/>
            <person name="Hunt D.F."/>
            <person name="Sun T.P."/>
        </authorList>
    </citation>
    <scope>FUNCTION</scope>
    <scope>CATALYTIC ACTIVITY</scope>
    <scope>BIOPHYSICOCHEMICAL PROPERTIES</scope>
    <scope>MUTAGENESIS OF GLU-567 AND LYS-665</scope>
</reference>
<reference key="16">
    <citation type="journal article" date="2020" name="Development">
        <title>The Arabidopsis O-fucosyltransferase SPINDLY regulates root hair patterning independently of gibberellin signaling.</title>
        <authorList>
            <person name="Mutanwad K.V."/>
            <person name="Zangl I."/>
            <person name="Lucyshyn D."/>
        </authorList>
    </citation>
    <scope>FUNCTION</scope>
    <scope>DISRUPTION PHENOTYPE</scope>
</reference>
<reference key="17">
    <citation type="journal article" date="2020" name="Mol. Plant">
        <title>Nuclear Localized O-Fucosyltransferase SPY Facilitates PRR5 Proteolysis to Fine-Tune the Pace of Arabidopsis Circadian Clock.</title>
        <authorList>
            <person name="Wang Y."/>
            <person name="He Y."/>
            <person name="Su C."/>
            <person name="Zentella R."/>
            <person name="Sun T.P."/>
            <person name="Wang L."/>
        </authorList>
    </citation>
    <scope>FUNCTION</scope>
    <scope>SUBCELLULAR LOCATION</scope>
    <scope>INTERACTION WITH APRR5</scope>
    <scope>MUTAGENESIS OF GLY-593</scope>
</reference>
<reference key="18">
    <citation type="journal article" date="2021" name="Front. Plant Sci.">
        <title>O-fucosylation of CPN20 by SPINDLY derepresses abscisic acid signaling during seed germination and seedling development.</title>
        <authorList>
            <person name="Liang L."/>
            <person name="Wang Q."/>
            <person name="Song Z."/>
            <person name="Wu Y."/>
            <person name="Liang Q."/>
            <person name="Wang Q."/>
            <person name="Yang J."/>
            <person name="Bi Y."/>
            <person name="Zhou W."/>
            <person name="Fan L.M."/>
        </authorList>
    </citation>
    <scope>FUNCTION</scope>
    <scope>INTERACTION WITH CPN20</scope>
</reference>
<proteinExistence type="evidence at protein level"/>
<organism>
    <name type="scientific">Arabidopsis thaliana</name>
    <name type="common">Mouse-ear cress</name>
    <dbReference type="NCBI Taxonomy" id="3702"/>
    <lineage>
        <taxon>Eukaryota</taxon>
        <taxon>Viridiplantae</taxon>
        <taxon>Streptophyta</taxon>
        <taxon>Embryophyta</taxon>
        <taxon>Tracheophyta</taxon>
        <taxon>Spermatophyta</taxon>
        <taxon>Magnoliopsida</taxon>
        <taxon>eudicotyledons</taxon>
        <taxon>Gunneridae</taxon>
        <taxon>Pentapetalae</taxon>
        <taxon>rosids</taxon>
        <taxon>malvids</taxon>
        <taxon>Brassicales</taxon>
        <taxon>Brassicaceae</taxon>
        <taxon>Camelineae</taxon>
        <taxon>Arabidopsis</taxon>
    </lineage>
</organism>
<name>SPY_ARATH</name>
<comment type="function">
    <text evidence="2 5 6 7 9 10 11 12 13 14">Probable O-linked N-acetylglucosamine transferase (OGT) involved in various processes such as gibberellin (GA) signaling pathway and circadian clock. OGTs catalyze the addition of nucleotide-activated sugars directly onto the polypeptide through O-glycosidic linkage with the hydroxyl of serine or threonine. Probably acts by adding O-linked sugars to yet unknown proteins. Acts as a repressor of GA signaling pathway to inhibit hypocotyl elongation. Functions with GIGANTEA (GI) in pathways controlling flowering, circadian cotyledon movements and hypocotyl elongation. Acts as a light-regulated promoter of elongation via its interaction with GI. Acts as an activator of cytokinin signaling. Required with SEC for gamete and seed development (PubMed:12136030). Its OGT activity has been proved in vitro but not in vivo (PubMed:11457967, PubMed:12136030, PubMed:15155885, PubMed:15608330, PubMed:8799194, Ref.5). Possesses O-fucosyltransferase activity on specific serine and threonine residues (PubMed:28244988). Mediates O-fucosylation of the DELLA protein RGA, a repressor of the GA signaling pathway (PubMed:28244988). O-fucosylation enhances RGA activity by promoting RGA binding to key transcription factors in brassinosteroid and light-signaling pathways (PubMed:28244988). Regulates root hair patterning upstream of the transcription factor WER, independently of DELLA proteins and GA signaling (PubMed:32928908). Involved in abscisic acid (ABA) signaling partly through functional ABAR (PubMed:34712252). Mediates O-fucosylation of CPN20 that may depress ABA responses during seed germination and seedling development (PubMed:34712252). Involved in the modulation of the pace of the circadian clock by mediating O-fucosylation of APRR5, one of the core circadian clock components (PubMed:31899321). O-fucosylation promotes APRR5 proteolysis (PubMed:31899321).</text>
</comment>
<comment type="catalytic activity">
    <reaction evidence="14">
        <text>L-seryl-[protein] + UDP-N-acetyl-alpha-D-glucosamine = 3-O-(N-acetyl-beta-D-glucosaminyl)-L-seryl-[protein] + UDP + H(+)</text>
        <dbReference type="Rhea" id="RHEA:48904"/>
        <dbReference type="Rhea" id="RHEA-COMP:9863"/>
        <dbReference type="Rhea" id="RHEA-COMP:12251"/>
        <dbReference type="ChEBI" id="CHEBI:15378"/>
        <dbReference type="ChEBI" id="CHEBI:29999"/>
        <dbReference type="ChEBI" id="CHEBI:57705"/>
        <dbReference type="ChEBI" id="CHEBI:58223"/>
        <dbReference type="ChEBI" id="CHEBI:90838"/>
        <dbReference type="EC" id="2.4.1.255"/>
    </reaction>
    <physiologicalReaction direction="left-to-right" evidence="14">
        <dbReference type="Rhea" id="RHEA:48905"/>
    </physiologicalReaction>
</comment>
<comment type="catalytic activity">
    <reaction evidence="14">
        <text>L-threonyl-[protein] + UDP-N-acetyl-alpha-D-glucosamine = 3-O-(N-acetyl-beta-D-glucosaminyl)-L-threonyl-[protein] + UDP + H(+)</text>
        <dbReference type="Rhea" id="RHEA:48908"/>
        <dbReference type="Rhea" id="RHEA-COMP:11060"/>
        <dbReference type="Rhea" id="RHEA-COMP:12252"/>
        <dbReference type="ChEBI" id="CHEBI:15378"/>
        <dbReference type="ChEBI" id="CHEBI:30013"/>
        <dbReference type="ChEBI" id="CHEBI:57705"/>
        <dbReference type="ChEBI" id="CHEBI:58223"/>
        <dbReference type="ChEBI" id="CHEBI:90840"/>
        <dbReference type="EC" id="2.4.1.255"/>
    </reaction>
    <physiologicalReaction direction="left-to-right" evidence="14">
        <dbReference type="Rhea" id="RHEA:48909"/>
    </physiologicalReaction>
</comment>
<comment type="catalytic activity">
    <reaction evidence="9">
        <text>L-seryl-[protein] + GDP-beta-L-fucose = 3-O-(alpha-L-fucosyl)-L-seryl-[protein] + GDP + H(+)</text>
        <dbReference type="Rhea" id="RHEA:63644"/>
        <dbReference type="Rhea" id="RHEA-COMP:9863"/>
        <dbReference type="Rhea" id="RHEA-COMP:17914"/>
        <dbReference type="ChEBI" id="CHEBI:15378"/>
        <dbReference type="ChEBI" id="CHEBI:29999"/>
        <dbReference type="ChEBI" id="CHEBI:57273"/>
        <dbReference type="ChEBI" id="CHEBI:58189"/>
        <dbReference type="ChEBI" id="CHEBI:189632"/>
        <dbReference type="EC" id="2.4.1.221"/>
    </reaction>
    <physiologicalReaction direction="left-to-right" evidence="9">
        <dbReference type="Rhea" id="RHEA:63645"/>
    </physiologicalReaction>
</comment>
<comment type="catalytic activity">
    <reaction evidence="9">
        <text>L-threonyl-[protein] + GDP-beta-L-fucose = 3-O-(alpha-L-fucosyl)-L-threonyl-[protein] + GDP + H(+)</text>
        <dbReference type="Rhea" id="RHEA:70491"/>
        <dbReference type="Rhea" id="RHEA-COMP:11060"/>
        <dbReference type="Rhea" id="RHEA-COMP:17915"/>
        <dbReference type="ChEBI" id="CHEBI:15378"/>
        <dbReference type="ChEBI" id="CHEBI:30013"/>
        <dbReference type="ChEBI" id="CHEBI:57273"/>
        <dbReference type="ChEBI" id="CHEBI:58189"/>
        <dbReference type="ChEBI" id="CHEBI:189631"/>
        <dbReference type="EC" id="2.4.1.221"/>
    </reaction>
    <physiologicalReaction direction="left-to-right" evidence="9">
        <dbReference type="Rhea" id="RHEA:70492"/>
    </physiologicalReaction>
</comment>
<comment type="biophysicochemical properties">
    <kinetics>
        <KM evidence="9">50.5 uM for GDP-beta-L-fucose</KM>
    </kinetics>
    <phDependence>
        <text evidence="9">Optimum pH is 8.0.</text>
    </phDependence>
</comment>
<comment type="pathway">
    <text evidence="16">Protein modification; protein glycosylation.</text>
</comment>
<comment type="subunit">
    <text evidence="6 8 10 12">Homomultimer; via its TPR repeats. Interacts with GI (PubMed:15155885). Interacts with TCP14 and TCP15 (PubMed:15155885, PubMed:22267487). Interacts (via N-terminus) with APRR5 (PubMed:31899321). Interacts with CPN20 (PubMed:34712252).</text>
</comment>
<comment type="interaction">
    <interactant intactId="EBI-446372">
        <id>Q96301</id>
    </interactant>
    <interactant intactId="EBI-446380">
        <id>Q9SQI2</id>
        <label>GI</label>
    </interactant>
    <organismsDiffer>false</organismsDiffer>
    <experiments>4</experiments>
</comment>
<comment type="subcellular location">
    <subcellularLocation>
        <location evidence="4 10">Cytoplasm</location>
    </subcellularLocation>
    <subcellularLocation>
        <location evidence="4 10">Nucleus</location>
    </subcellularLocation>
</comment>
<comment type="alternative products">
    <event type="alternative splicing"/>
    <isoform>
        <id>Q96301-1</id>
        <name>1</name>
        <sequence type="displayed"/>
    </isoform>
    <text>A number of isoforms are produced. According to EST sequences.</text>
</comment>
<comment type="tissue specificity">
    <text evidence="4">Widely expressed. Present throughout the plant (at protein level).</text>
</comment>
<comment type="developmental stage">
    <text evidence="4">Detected in all organs of the plant and at all stages of the life cycle. Detected 1 day after germination in the radicle just before its emergence from the seed. At 2.5 and 3 days after germination, expression in the young seedling is highest in the cotyledons and the root tip. At 3, 4 and 5 days, expression is also detectable in the hypocotyl. At 10 days of age, expression in the first pair of true leaves is reduced relative to the rest of the seedling. 2 days later, this difference disappears and the expression level is again fairly similar throughout the aboveground portion of the plant, with a higher intensity in the vegetative apex. This developmental regulation is not detected in leaves developing at later nodes. Older plants also display uniform expression throughout the vegetative organs, but this expression is less intense. In older seedlings, expression is observed throughout the root, particularly at the tip of the primary root and in lateral roots. Expression is also observed in trichomes and senescing leaves, and in inflorescence internodes, flowers. Expression is observed in the seeds and carpels of fully elongated siliques. Lower expression is also observed in expanding siliques and in the developing seeds in these siliques. Expression is also detected in the embryo of maturing seeds (after the disappearance of the endosperm) (at protein level).</text>
</comment>
<comment type="domain">
    <text evidence="3">The TPR repeats mediate protein-protein interactions and are essential for its function. Expression of such repeats in plants accelerate flowering.</text>
</comment>
<comment type="disruption phenotype">
    <text evidence="11">Altered root epidermis morphology and root hair patterning.</text>
</comment>
<comment type="similarity">
    <text evidence="16">Belongs to the glycosyltransferase 41 family. O-GlcNAc transferase subfamily.</text>
</comment>
<comment type="sequence caution" evidence="16">
    <conflict type="frameshift">
        <sequence resource="EMBL-CDS" id="BAD94413"/>
    </conflict>
</comment>
<comment type="sequence caution" evidence="16">
    <conflict type="frameshift">
        <sequence resource="EMBL-CDS" id="BAD95289"/>
    </conflict>
</comment>
<evidence type="ECO:0000256" key="1">
    <source>
        <dbReference type="SAM" id="MobiDB-lite"/>
    </source>
</evidence>
<evidence type="ECO:0000269" key="2">
    <source>
    </source>
</evidence>
<evidence type="ECO:0000269" key="3">
    <source>
    </source>
</evidence>
<evidence type="ECO:0000269" key="4">
    <source>
    </source>
</evidence>
<evidence type="ECO:0000269" key="5">
    <source>
    </source>
</evidence>
<evidence type="ECO:0000269" key="6">
    <source>
    </source>
</evidence>
<evidence type="ECO:0000269" key="7">
    <source>
    </source>
</evidence>
<evidence type="ECO:0000269" key="8">
    <source>
    </source>
</evidence>
<evidence type="ECO:0000269" key="9">
    <source>
    </source>
</evidence>
<evidence type="ECO:0000269" key="10">
    <source>
    </source>
</evidence>
<evidence type="ECO:0000269" key="11">
    <source>
    </source>
</evidence>
<evidence type="ECO:0000269" key="12">
    <source>
    </source>
</evidence>
<evidence type="ECO:0000269" key="13">
    <source>
    </source>
</evidence>
<evidence type="ECO:0000269" key="14">
    <source ref="5"/>
</evidence>
<evidence type="ECO:0000303" key="15">
    <source>
    </source>
</evidence>
<evidence type="ECO:0000305" key="16"/>
<evidence type="ECO:0000312" key="17">
    <source>
        <dbReference type="Araport" id="AT3G11540"/>
    </source>
</evidence>
<evidence type="ECO:0000312" key="18">
    <source>
        <dbReference type="EMBL" id="AAG51433.1"/>
    </source>
</evidence>
<evidence type="ECO:0007744" key="19">
    <source>
    </source>
</evidence>
<evidence type="ECO:0007744" key="20">
    <source>
    </source>
</evidence>
<evidence type="ECO:0007829" key="21">
    <source>
        <dbReference type="PDB" id="7Y4I"/>
    </source>
</evidence>
<protein>
    <recommendedName>
        <fullName evidence="16">Probable UDP-N-acetylglucosamine--peptide N-acetylglucosaminyltransferase SPINDLY</fullName>
        <ecNumber evidence="14">2.4.1.255</ecNumber>
    </recommendedName>
    <alternativeName>
        <fullName evidence="16">GDP-fucose protein O-fucosyltransferase SPINDLY</fullName>
        <ecNumber evidence="9">2.4.1.221</ecNumber>
    </alternativeName>
</protein>